<dbReference type="EMBL" id="CU458896">
    <property type="protein sequence ID" value="CAM61535.1"/>
    <property type="molecule type" value="Genomic_DNA"/>
</dbReference>
<dbReference type="RefSeq" id="WP_005059844.1">
    <property type="nucleotide sequence ID" value="NZ_MLCG01000002.1"/>
</dbReference>
<dbReference type="SMR" id="B1MLV8"/>
<dbReference type="GeneID" id="93378394"/>
<dbReference type="KEGG" id="mab:MAB_1449"/>
<dbReference type="Proteomes" id="UP000007137">
    <property type="component" value="Chromosome"/>
</dbReference>
<dbReference type="GO" id="GO:0005886">
    <property type="term" value="C:plasma membrane"/>
    <property type="evidence" value="ECO:0007669"/>
    <property type="project" value="UniProtKB-SubCell"/>
</dbReference>
<dbReference type="GO" id="GO:0045259">
    <property type="term" value="C:proton-transporting ATP synthase complex"/>
    <property type="evidence" value="ECO:0007669"/>
    <property type="project" value="UniProtKB-KW"/>
</dbReference>
<dbReference type="GO" id="GO:0046933">
    <property type="term" value="F:proton-transporting ATP synthase activity, rotational mechanism"/>
    <property type="evidence" value="ECO:0007669"/>
    <property type="project" value="UniProtKB-UniRule"/>
</dbReference>
<dbReference type="GO" id="GO:0046961">
    <property type="term" value="F:proton-transporting ATPase activity, rotational mechanism"/>
    <property type="evidence" value="ECO:0007669"/>
    <property type="project" value="TreeGrafter"/>
</dbReference>
<dbReference type="CDD" id="cd06503">
    <property type="entry name" value="ATP-synt_Fo_b"/>
    <property type="match status" value="1"/>
</dbReference>
<dbReference type="HAMAP" id="MF_01398">
    <property type="entry name" value="ATP_synth_b_bprime"/>
    <property type="match status" value="1"/>
</dbReference>
<dbReference type="InterPro" id="IPR028987">
    <property type="entry name" value="ATP_synth_B-like_membr_sf"/>
</dbReference>
<dbReference type="InterPro" id="IPR002146">
    <property type="entry name" value="ATP_synth_b/b'su_bac/chlpt"/>
</dbReference>
<dbReference type="InterPro" id="IPR050059">
    <property type="entry name" value="ATP_synthase_B_chain"/>
</dbReference>
<dbReference type="NCBIfam" id="NF004412">
    <property type="entry name" value="PRK05759.1-3"/>
    <property type="match status" value="1"/>
</dbReference>
<dbReference type="PANTHER" id="PTHR33445:SF1">
    <property type="entry name" value="ATP SYNTHASE SUBUNIT B"/>
    <property type="match status" value="1"/>
</dbReference>
<dbReference type="PANTHER" id="PTHR33445">
    <property type="entry name" value="ATP SYNTHASE SUBUNIT B', CHLOROPLASTIC"/>
    <property type="match status" value="1"/>
</dbReference>
<dbReference type="Pfam" id="PF00430">
    <property type="entry name" value="ATP-synt_B"/>
    <property type="match status" value="1"/>
</dbReference>
<dbReference type="SUPFAM" id="SSF81573">
    <property type="entry name" value="F1F0 ATP synthase subunit B, membrane domain"/>
    <property type="match status" value="1"/>
</dbReference>
<reference key="1">
    <citation type="journal article" date="2009" name="PLoS ONE">
        <title>Non mycobacterial virulence genes in the genome of the emerging pathogen Mycobacterium abscessus.</title>
        <authorList>
            <person name="Ripoll F."/>
            <person name="Pasek S."/>
            <person name="Schenowitz C."/>
            <person name="Dossat C."/>
            <person name="Barbe V."/>
            <person name="Rottman M."/>
            <person name="Macheras E."/>
            <person name="Heym B."/>
            <person name="Herrmann J.L."/>
            <person name="Daffe M."/>
            <person name="Brosch R."/>
            <person name="Risler J.L."/>
            <person name="Gaillard J.L."/>
        </authorList>
    </citation>
    <scope>NUCLEOTIDE SEQUENCE [LARGE SCALE GENOMIC DNA]</scope>
    <source>
        <strain>ATCC 19977 / DSM 44196 / CCUG 20993 / CIP 104536 / JCM 13569 / NCTC 13031 / TMC 1543 / L948</strain>
    </source>
</reference>
<accession>B1MLV8</accession>
<gene>
    <name evidence="1" type="primary">atpF</name>
    <name type="ordered locus">MAB_1449</name>
</gene>
<feature type="chain" id="PRO_0000368593" description="ATP synthase subunit b">
    <location>
        <begin position="1"/>
        <end position="177"/>
    </location>
</feature>
<feature type="transmembrane region" description="Helical" evidence="1">
    <location>
        <begin position="35"/>
        <end position="55"/>
    </location>
</feature>
<name>ATPF_MYCA9</name>
<organism>
    <name type="scientific">Mycobacteroides abscessus (strain ATCC 19977 / DSM 44196 / CCUG 20993 / CIP 104536 / JCM 13569 / NCTC 13031 / TMC 1543 / L948)</name>
    <name type="common">Mycobacterium abscessus</name>
    <dbReference type="NCBI Taxonomy" id="561007"/>
    <lineage>
        <taxon>Bacteria</taxon>
        <taxon>Bacillati</taxon>
        <taxon>Actinomycetota</taxon>
        <taxon>Actinomycetes</taxon>
        <taxon>Mycobacteriales</taxon>
        <taxon>Mycobacteriaceae</taxon>
        <taxon>Mycobacteroides</taxon>
        <taxon>Mycobacteroides abscessus</taxon>
    </lineage>
</organism>
<protein>
    <recommendedName>
        <fullName evidence="1">ATP synthase subunit b</fullName>
    </recommendedName>
    <alternativeName>
        <fullName evidence="1">ATP synthase F(0) sector subunit b</fullName>
    </alternativeName>
    <alternativeName>
        <fullName evidence="1">ATPase subunit I</fullName>
    </alternativeName>
    <alternativeName>
        <fullName evidence="1">F-type ATPase subunit b</fullName>
        <shortName evidence="1">F-ATPase subunit b</shortName>
    </alternativeName>
</protein>
<keyword id="KW-0066">ATP synthesis</keyword>
<keyword id="KW-1003">Cell membrane</keyword>
<keyword id="KW-0138">CF(0)</keyword>
<keyword id="KW-0375">Hydrogen ion transport</keyword>
<keyword id="KW-0406">Ion transport</keyword>
<keyword id="KW-0472">Membrane</keyword>
<keyword id="KW-1185">Reference proteome</keyword>
<keyword id="KW-0812">Transmembrane</keyword>
<keyword id="KW-1133">Transmembrane helix</keyword>
<keyword id="KW-0813">Transport</keyword>
<proteinExistence type="inferred from homology"/>
<sequence>MGELHSVASAVTAVAAEAAEEGGKQNNFLIPNGTFFVVLAIFLIVLAVIGTFVVPPIQKVLKAREDMVTKTAEDNRNAAEQFTAAEADYKDELAKARGAATAVRDEARAEGRGILEDMRQRANAEATAVTETAAAELARQGEVTAGELATNVDSLSRTLAERVLGVSLSEPANAGRG</sequence>
<comment type="function">
    <text evidence="1">F(1)F(0) ATP synthase produces ATP from ADP in the presence of a proton or sodium gradient. F-type ATPases consist of two structural domains, F(1) containing the extramembraneous catalytic core and F(0) containing the membrane proton channel, linked together by a central stalk and a peripheral stalk. During catalysis, ATP synthesis in the catalytic domain of F(1) is coupled via a rotary mechanism of the central stalk subunits to proton translocation.</text>
</comment>
<comment type="function">
    <text evidence="1">Component of the F(0) channel, it forms part of the peripheral stalk, linking F(1) to F(0).</text>
</comment>
<comment type="subunit">
    <text evidence="1">F-type ATPases have 2 components, F(1) - the catalytic core - and F(0) - the membrane proton channel. F(1) has five subunits: alpha(3), beta(3), gamma(1), delta(1), epsilon(1). F(0) has three main subunits: a(1), b(2) and c(10-14). The alpha and beta chains form an alternating ring which encloses part of the gamma chain. F(1) is attached to F(0) by a central stalk formed by the gamma and epsilon chains, while a peripheral stalk is formed by the delta and b chains.</text>
</comment>
<comment type="subcellular location">
    <subcellularLocation>
        <location evidence="1">Cell membrane</location>
        <topology evidence="1">Single-pass membrane protein</topology>
    </subcellularLocation>
</comment>
<comment type="similarity">
    <text evidence="1">Belongs to the ATPase B chain family.</text>
</comment>
<evidence type="ECO:0000255" key="1">
    <source>
        <dbReference type="HAMAP-Rule" id="MF_01398"/>
    </source>
</evidence>